<protein>
    <recommendedName>
        <fullName>Betaine--homocysteine S-methyltransferase 1</fullName>
        <ecNumber evidence="3">2.1.1.5</ecNumber>
    </recommendedName>
</protein>
<evidence type="ECO:0000250" key="1">
    <source>
        <dbReference type="UniProtKB" id="O09171"/>
    </source>
</evidence>
<evidence type="ECO:0000250" key="2">
    <source>
        <dbReference type="UniProtKB" id="O35490"/>
    </source>
</evidence>
<evidence type="ECO:0000250" key="3">
    <source>
        <dbReference type="UniProtKB" id="Q93088"/>
    </source>
</evidence>
<evidence type="ECO:0000255" key="4">
    <source>
        <dbReference type="PROSITE-ProRule" id="PRU00333"/>
    </source>
</evidence>
<name>BHMT1_PONAB</name>
<reference key="1">
    <citation type="submission" date="2004-11" db="EMBL/GenBank/DDBJ databases">
        <authorList>
            <consortium name="The German cDNA consortium"/>
        </authorList>
    </citation>
    <scope>NUCLEOTIDE SEQUENCE [LARGE SCALE MRNA]</scope>
    <source>
        <tissue>Kidney</tissue>
    </source>
</reference>
<accession>Q5RFG2</accession>
<dbReference type="EC" id="2.1.1.5" evidence="3"/>
<dbReference type="EMBL" id="CR857196">
    <property type="protein sequence ID" value="CAH89495.1"/>
    <property type="molecule type" value="mRNA"/>
</dbReference>
<dbReference type="RefSeq" id="NP_001127156.1">
    <property type="nucleotide sequence ID" value="NM_001133684.1"/>
</dbReference>
<dbReference type="SMR" id="Q5RFG2"/>
<dbReference type="FunCoup" id="Q5RFG2">
    <property type="interactions" value="282"/>
</dbReference>
<dbReference type="STRING" id="9601.ENSPPYP00000017424"/>
<dbReference type="Ensembl" id="ENSPPYT00000018130.2">
    <property type="protein sequence ID" value="ENSPPYP00000017424.2"/>
    <property type="gene ID" value="ENSPPYG00000015586.2"/>
</dbReference>
<dbReference type="GeneID" id="100174207"/>
<dbReference type="KEGG" id="pon:100174207"/>
<dbReference type="CTD" id="635"/>
<dbReference type="eggNOG" id="KOG1579">
    <property type="taxonomic scope" value="Eukaryota"/>
</dbReference>
<dbReference type="GeneTree" id="ENSGT00390000003122"/>
<dbReference type="InParanoid" id="Q5RFG2"/>
<dbReference type="OMA" id="CKDKTEV"/>
<dbReference type="OrthoDB" id="261426at2759"/>
<dbReference type="UniPathway" id="UPA00051">
    <property type="reaction ID" value="UER00083"/>
</dbReference>
<dbReference type="UniPathway" id="UPA00291">
    <property type="reaction ID" value="UER00432"/>
</dbReference>
<dbReference type="Proteomes" id="UP000001595">
    <property type="component" value="Chromosome 5"/>
</dbReference>
<dbReference type="GO" id="GO:0005829">
    <property type="term" value="C:cytosol"/>
    <property type="evidence" value="ECO:0007669"/>
    <property type="project" value="UniProtKB-SubCell"/>
</dbReference>
<dbReference type="GO" id="GO:0070062">
    <property type="term" value="C:extracellular exosome"/>
    <property type="evidence" value="ECO:0007669"/>
    <property type="project" value="Ensembl"/>
</dbReference>
<dbReference type="GO" id="GO:0005634">
    <property type="term" value="C:nucleus"/>
    <property type="evidence" value="ECO:0007669"/>
    <property type="project" value="UniProtKB-SubCell"/>
</dbReference>
<dbReference type="GO" id="GO:0047150">
    <property type="term" value="F:betaine-homocysteine S-methyltransferase activity"/>
    <property type="evidence" value="ECO:0007669"/>
    <property type="project" value="UniProtKB-EC"/>
</dbReference>
<dbReference type="GO" id="GO:0008270">
    <property type="term" value="F:zinc ion binding"/>
    <property type="evidence" value="ECO:0007669"/>
    <property type="project" value="Ensembl"/>
</dbReference>
<dbReference type="GO" id="GO:0071266">
    <property type="term" value="P:'de novo' L-methionine biosynthetic process"/>
    <property type="evidence" value="ECO:0007669"/>
    <property type="project" value="Ensembl"/>
</dbReference>
<dbReference type="GO" id="GO:0006579">
    <property type="term" value="P:amino-acid betaine catabolic process"/>
    <property type="evidence" value="ECO:0007669"/>
    <property type="project" value="UniProtKB-UniPathway"/>
</dbReference>
<dbReference type="GO" id="GO:0071267">
    <property type="term" value="P:L-methionine salvage"/>
    <property type="evidence" value="ECO:0007669"/>
    <property type="project" value="Ensembl"/>
</dbReference>
<dbReference type="GO" id="GO:0032259">
    <property type="term" value="P:methylation"/>
    <property type="evidence" value="ECO:0007669"/>
    <property type="project" value="UniProtKB-KW"/>
</dbReference>
<dbReference type="FunFam" id="3.20.20.330:FF:000003">
    <property type="entry name" value="Betaine--homocysteine S-methyltransferase 1"/>
    <property type="match status" value="1"/>
</dbReference>
<dbReference type="Gene3D" id="3.20.20.330">
    <property type="entry name" value="Homocysteine-binding-like domain"/>
    <property type="match status" value="1"/>
</dbReference>
<dbReference type="InterPro" id="IPR017226">
    <property type="entry name" value="Betaine-hCys_S-MeTrfase_BHMT"/>
</dbReference>
<dbReference type="InterPro" id="IPR051524">
    <property type="entry name" value="BHMT"/>
</dbReference>
<dbReference type="InterPro" id="IPR003726">
    <property type="entry name" value="HCY_dom"/>
</dbReference>
<dbReference type="InterPro" id="IPR036589">
    <property type="entry name" value="HCY_dom_sf"/>
</dbReference>
<dbReference type="PANTHER" id="PTHR46120">
    <property type="entry name" value="BETAINE--HOMOCYSTEINE S-METHYLTRANSFERASE 1"/>
    <property type="match status" value="1"/>
</dbReference>
<dbReference type="PANTHER" id="PTHR46120:SF2">
    <property type="entry name" value="BETAINE--HOMOCYSTEINE S-METHYLTRANSFERASE 1"/>
    <property type="match status" value="1"/>
</dbReference>
<dbReference type="Pfam" id="PF02574">
    <property type="entry name" value="S-methyl_trans"/>
    <property type="match status" value="1"/>
</dbReference>
<dbReference type="PIRSF" id="PIRSF037505">
    <property type="entry name" value="Betaine_HMT"/>
    <property type="match status" value="1"/>
</dbReference>
<dbReference type="SUPFAM" id="SSF82282">
    <property type="entry name" value="Homocysteine S-methyltransferase"/>
    <property type="match status" value="1"/>
</dbReference>
<dbReference type="PROSITE" id="PS50970">
    <property type="entry name" value="HCY"/>
    <property type="match status" value="1"/>
</dbReference>
<comment type="function">
    <text evidence="3">Involved in the regulation of homocysteine metabolism. Converts betaine and homocysteine to dimethylglycine and methionine, respectively. This reaction is also required for the irreversible oxidation of choline.</text>
</comment>
<comment type="catalytic activity">
    <reaction evidence="3">
        <text>L-homocysteine + glycine betaine = N,N-dimethylglycine + L-methionine</text>
        <dbReference type="Rhea" id="RHEA:22336"/>
        <dbReference type="ChEBI" id="CHEBI:17750"/>
        <dbReference type="ChEBI" id="CHEBI:57844"/>
        <dbReference type="ChEBI" id="CHEBI:58199"/>
        <dbReference type="ChEBI" id="CHEBI:58251"/>
        <dbReference type="EC" id="2.1.1.5"/>
    </reaction>
    <physiologicalReaction direction="left-to-right" evidence="3">
        <dbReference type="Rhea" id="RHEA:22337"/>
    </physiologicalReaction>
</comment>
<comment type="cofactor">
    <cofactor evidence="3">
        <name>Zn(2+)</name>
        <dbReference type="ChEBI" id="CHEBI:29105"/>
    </cofactor>
    <text evidence="3">Binds 1 zinc ion per subunit.</text>
</comment>
<comment type="pathway">
    <text>Amine and polyamine degradation; betaine degradation; sarcosine from betaine: step 1/2.</text>
</comment>
<comment type="pathway">
    <text evidence="3">Amino-acid biosynthesis; L-methionine biosynthesis via de novo pathway; L-methionine from L-homocysteine (BhmT route): step 1/1.</text>
</comment>
<comment type="subunit">
    <text evidence="3">Homotetramer.</text>
</comment>
<comment type="subcellular location">
    <subcellularLocation>
        <location evidence="1">Cytoplasm</location>
        <location evidence="1">Cytosol</location>
    </subcellularLocation>
    <subcellularLocation>
        <location evidence="1">Nucleus</location>
    </subcellularLocation>
    <text evidence="1">Predominantly localized in the cytoplasm with a small fraction detected in the nucleus. Translocates into the nucleus upon oxidative stress.</text>
</comment>
<sequence>MPPVVGKKAKKGILERLNAGEIVIGDGGFVFALEKRGYVKAGPWTPEAAVEHPEAVRQLHREFLRAGSNVMQTFTFYASEDKLENRGNYVLEKISGQKVNEAACDIARQVADEGDALVAGGVSQTPSYLSCKSETEVKKVFLQQLEVFMKKNVDFLIAEYFEHVEEAVWAVETLIASGKPVAATMCIGPEGDLHGVPPGECAVRLVKAGASIIGVNCHFDPTISLKTVKLMKEGLEAARLKAHLMSQPLAYHTPDCNKQGFIDLPEFPFGLEPRVATRWDIQKYAREAYNMGIRYIGGCCGFEPYHIRAIAEELAPERGFLPPASEKHGSWGSALDMHTKPWVRARARKEYWENLRIASGRPYNPSMSKPDGWGVTKGTAELMQQKEATTEQQLKELFEKQKFKLQ</sequence>
<feature type="chain" id="PRO_0000234128" description="Betaine--homocysteine S-methyltransferase 1">
    <location>
        <begin position="1"/>
        <end position="406"/>
    </location>
</feature>
<feature type="domain" description="Hcy-binding" evidence="4">
    <location>
        <begin position="11"/>
        <end position="314"/>
    </location>
</feature>
<feature type="binding site" evidence="3 4">
    <location>
        <position position="217"/>
    </location>
    <ligand>
        <name>Zn(2+)</name>
        <dbReference type="ChEBI" id="CHEBI:29105"/>
    </ligand>
</feature>
<feature type="binding site" evidence="3 4">
    <location>
        <position position="299"/>
    </location>
    <ligand>
        <name>Zn(2+)</name>
        <dbReference type="ChEBI" id="CHEBI:29105"/>
    </ligand>
</feature>
<feature type="binding site" evidence="3 4">
    <location>
        <position position="300"/>
    </location>
    <ligand>
        <name>Zn(2+)</name>
        <dbReference type="ChEBI" id="CHEBI:29105"/>
    </ligand>
</feature>
<feature type="modified residue" description="N6-succinyllysine" evidence="2">
    <location>
        <position position="40"/>
    </location>
</feature>
<feature type="modified residue" description="N6-succinyllysine" evidence="2">
    <location>
        <position position="93"/>
    </location>
</feature>
<feature type="modified residue" description="N6-succinyllysine" evidence="2">
    <location>
        <position position="98"/>
    </location>
</feature>
<feature type="modified residue" description="N6-succinyllysine" evidence="2">
    <location>
        <position position="232"/>
    </location>
</feature>
<feature type="modified residue" description="N6-succinyllysine" evidence="2">
    <location>
        <position position="241"/>
    </location>
</feature>
<feature type="modified residue" description="Phosphoserine" evidence="1">
    <location>
        <position position="330"/>
    </location>
</feature>
<feature type="modified residue" description="N6-succinyllysine" evidence="2">
    <location>
        <position position="340"/>
    </location>
</feature>
<feature type="modified residue" description="N6-succinyllysine" evidence="2">
    <location>
        <position position="377"/>
    </location>
</feature>
<organism>
    <name type="scientific">Pongo abelii</name>
    <name type="common">Sumatran orangutan</name>
    <name type="synonym">Pongo pygmaeus abelii</name>
    <dbReference type="NCBI Taxonomy" id="9601"/>
    <lineage>
        <taxon>Eukaryota</taxon>
        <taxon>Metazoa</taxon>
        <taxon>Chordata</taxon>
        <taxon>Craniata</taxon>
        <taxon>Vertebrata</taxon>
        <taxon>Euteleostomi</taxon>
        <taxon>Mammalia</taxon>
        <taxon>Eutheria</taxon>
        <taxon>Euarchontoglires</taxon>
        <taxon>Primates</taxon>
        <taxon>Haplorrhini</taxon>
        <taxon>Catarrhini</taxon>
        <taxon>Hominidae</taxon>
        <taxon>Pongo</taxon>
    </lineage>
</organism>
<gene>
    <name type="primary">BHMT</name>
</gene>
<keyword id="KW-0963">Cytoplasm</keyword>
<keyword id="KW-0479">Metal-binding</keyword>
<keyword id="KW-0489">Methyltransferase</keyword>
<keyword id="KW-0539">Nucleus</keyword>
<keyword id="KW-0597">Phosphoprotein</keyword>
<keyword id="KW-1185">Reference proteome</keyword>
<keyword id="KW-0808">Transferase</keyword>
<keyword id="KW-0862">Zinc</keyword>
<proteinExistence type="evidence at transcript level"/>